<sequence>MAKEKFERSKPHVNVGTIGHVDHGKTTLTAALTTILAKKFGGAAKAYDQIDNAPEEKARGITINTSHVEYETETRHYAHVDCPGHADYVKNMITGAAQMDGAILVCSAADGPMPQTREHILLARQVGVPYIIVFMNKCDMVDDAELLELVEMEIRDLLSSYDFPGDDCPIVQGSALKALEGDAAYEEKIFELAAALDSYIPTPERAVDKPFLLPIEDVFSISGRGTVVTGRVERGIIHVGDEIEIVGLKETQKTTCTGVEMFRKLLDEGQAGDNVGVLLRGTKREDVERGQVLAKPGTITPHTKFKAEVYVLSKEEGGRHTPFFANYRPQFYFRTTDVTGAVTLEEGVEMVMPGENVTITVELIAPIAMEEGLRFAIREGGRTVGAGVVSSVIA</sequence>
<feature type="chain" id="PRO_0000091356" description="Elongation factor Tu">
    <location>
        <begin position="1"/>
        <end position="394"/>
    </location>
</feature>
<feature type="domain" description="tr-type G">
    <location>
        <begin position="10"/>
        <end position="204"/>
    </location>
</feature>
<feature type="region of interest" description="G1" evidence="1">
    <location>
        <begin position="19"/>
        <end position="26"/>
    </location>
</feature>
<feature type="region of interest" description="G2" evidence="1">
    <location>
        <begin position="60"/>
        <end position="64"/>
    </location>
</feature>
<feature type="region of interest" description="G3" evidence="1">
    <location>
        <begin position="81"/>
        <end position="84"/>
    </location>
</feature>
<feature type="region of interest" description="G4" evidence="1">
    <location>
        <begin position="136"/>
        <end position="139"/>
    </location>
</feature>
<feature type="region of interest" description="G5" evidence="1">
    <location>
        <begin position="174"/>
        <end position="176"/>
    </location>
</feature>
<feature type="binding site" evidence="2">
    <location>
        <begin position="19"/>
        <end position="26"/>
    </location>
    <ligand>
        <name>GTP</name>
        <dbReference type="ChEBI" id="CHEBI:37565"/>
    </ligand>
</feature>
<feature type="binding site" evidence="2">
    <location>
        <position position="26"/>
    </location>
    <ligand>
        <name>Mg(2+)</name>
        <dbReference type="ChEBI" id="CHEBI:18420"/>
    </ligand>
</feature>
<feature type="binding site" evidence="2">
    <location>
        <begin position="81"/>
        <end position="85"/>
    </location>
    <ligand>
        <name>GTP</name>
        <dbReference type="ChEBI" id="CHEBI:37565"/>
    </ligand>
</feature>
<feature type="binding site" evidence="2">
    <location>
        <begin position="136"/>
        <end position="139"/>
    </location>
    <ligand>
        <name>GTP</name>
        <dbReference type="ChEBI" id="CHEBI:37565"/>
    </ligand>
</feature>
<dbReference type="EC" id="3.6.5.3" evidence="2"/>
<dbReference type="EMBL" id="AL157959">
    <property type="protein sequence ID" value="CAM07452.1"/>
    <property type="molecule type" value="Genomic_DNA"/>
</dbReference>
<dbReference type="EMBL" id="AL157959">
    <property type="protein sequence ID" value="CAM07467.1"/>
    <property type="molecule type" value="Genomic_DNA"/>
</dbReference>
<dbReference type="SMR" id="P64026"/>
<dbReference type="EnsemblBacteria" id="CAM07452">
    <property type="protein sequence ID" value="CAM07452"/>
    <property type="gene ID" value="NMA0134"/>
</dbReference>
<dbReference type="EnsemblBacteria" id="CAM07467">
    <property type="protein sequence ID" value="CAM07467"/>
    <property type="gene ID" value="NMA0149"/>
</dbReference>
<dbReference type="KEGG" id="nma:NMA0134"/>
<dbReference type="KEGG" id="nma:NMA0149"/>
<dbReference type="HOGENOM" id="CLU_007265_0_1_4"/>
<dbReference type="Proteomes" id="UP000000626">
    <property type="component" value="Chromosome"/>
</dbReference>
<dbReference type="GO" id="GO:0005829">
    <property type="term" value="C:cytosol"/>
    <property type="evidence" value="ECO:0007669"/>
    <property type="project" value="TreeGrafter"/>
</dbReference>
<dbReference type="GO" id="GO:0005525">
    <property type="term" value="F:GTP binding"/>
    <property type="evidence" value="ECO:0007669"/>
    <property type="project" value="UniProtKB-UniRule"/>
</dbReference>
<dbReference type="GO" id="GO:0003924">
    <property type="term" value="F:GTPase activity"/>
    <property type="evidence" value="ECO:0007669"/>
    <property type="project" value="InterPro"/>
</dbReference>
<dbReference type="GO" id="GO:0097216">
    <property type="term" value="F:guanosine tetraphosphate binding"/>
    <property type="evidence" value="ECO:0007669"/>
    <property type="project" value="UniProtKB-ARBA"/>
</dbReference>
<dbReference type="GO" id="GO:0003746">
    <property type="term" value="F:translation elongation factor activity"/>
    <property type="evidence" value="ECO:0007669"/>
    <property type="project" value="UniProtKB-UniRule"/>
</dbReference>
<dbReference type="CDD" id="cd01884">
    <property type="entry name" value="EF_Tu"/>
    <property type="match status" value="1"/>
</dbReference>
<dbReference type="CDD" id="cd03697">
    <property type="entry name" value="EFTU_II"/>
    <property type="match status" value="1"/>
</dbReference>
<dbReference type="CDD" id="cd03707">
    <property type="entry name" value="EFTU_III"/>
    <property type="match status" value="1"/>
</dbReference>
<dbReference type="FunFam" id="2.40.30.10:FF:000001">
    <property type="entry name" value="Elongation factor Tu"/>
    <property type="match status" value="1"/>
</dbReference>
<dbReference type="FunFam" id="3.40.50.300:FF:000003">
    <property type="entry name" value="Elongation factor Tu"/>
    <property type="match status" value="1"/>
</dbReference>
<dbReference type="Gene3D" id="3.40.50.300">
    <property type="entry name" value="P-loop containing nucleotide triphosphate hydrolases"/>
    <property type="match status" value="1"/>
</dbReference>
<dbReference type="Gene3D" id="2.40.30.10">
    <property type="entry name" value="Translation factors"/>
    <property type="match status" value="2"/>
</dbReference>
<dbReference type="HAMAP" id="MF_00118_B">
    <property type="entry name" value="EF_Tu_B"/>
    <property type="match status" value="1"/>
</dbReference>
<dbReference type="InterPro" id="IPR041709">
    <property type="entry name" value="EF-Tu_GTP-bd"/>
</dbReference>
<dbReference type="InterPro" id="IPR050055">
    <property type="entry name" value="EF-Tu_GTPase"/>
</dbReference>
<dbReference type="InterPro" id="IPR004161">
    <property type="entry name" value="EFTu-like_2"/>
</dbReference>
<dbReference type="InterPro" id="IPR033720">
    <property type="entry name" value="EFTU_2"/>
</dbReference>
<dbReference type="InterPro" id="IPR031157">
    <property type="entry name" value="G_TR_CS"/>
</dbReference>
<dbReference type="InterPro" id="IPR027417">
    <property type="entry name" value="P-loop_NTPase"/>
</dbReference>
<dbReference type="InterPro" id="IPR005225">
    <property type="entry name" value="Small_GTP-bd"/>
</dbReference>
<dbReference type="InterPro" id="IPR000795">
    <property type="entry name" value="T_Tr_GTP-bd_dom"/>
</dbReference>
<dbReference type="InterPro" id="IPR009000">
    <property type="entry name" value="Transl_B-barrel_sf"/>
</dbReference>
<dbReference type="InterPro" id="IPR009001">
    <property type="entry name" value="Transl_elong_EF1A/Init_IF2_C"/>
</dbReference>
<dbReference type="InterPro" id="IPR004541">
    <property type="entry name" value="Transl_elong_EFTu/EF1A_bac/org"/>
</dbReference>
<dbReference type="InterPro" id="IPR004160">
    <property type="entry name" value="Transl_elong_EFTu/EF1A_C"/>
</dbReference>
<dbReference type="NCBIfam" id="TIGR00485">
    <property type="entry name" value="EF-Tu"/>
    <property type="match status" value="1"/>
</dbReference>
<dbReference type="NCBIfam" id="NF000766">
    <property type="entry name" value="PRK00049.1"/>
    <property type="match status" value="1"/>
</dbReference>
<dbReference type="NCBIfam" id="NF009372">
    <property type="entry name" value="PRK12735.1"/>
    <property type="match status" value="1"/>
</dbReference>
<dbReference type="NCBIfam" id="NF009373">
    <property type="entry name" value="PRK12736.1"/>
    <property type="match status" value="1"/>
</dbReference>
<dbReference type="NCBIfam" id="TIGR00231">
    <property type="entry name" value="small_GTP"/>
    <property type="match status" value="1"/>
</dbReference>
<dbReference type="PANTHER" id="PTHR43721:SF22">
    <property type="entry name" value="ELONGATION FACTOR TU, MITOCHONDRIAL"/>
    <property type="match status" value="1"/>
</dbReference>
<dbReference type="PANTHER" id="PTHR43721">
    <property type="entry name" value="ELONGATION FACTOR TU-RELATED"/>
    <property type="match status" value="1"/>
</dbReference>
<dbReference type="Pfam" id="PF00009">
    <property type="entry name" value="GTP_EFTU"/>
    <property type="match status" value="1"/>
</dbReference>
<dbReference type="Pfam" id="PF03144">
    <property type="entry name" value="GTP_EFTU_D2"/>
    <property type="match status" value="1"/>
</dbReference>
<dbReference type="Pfam" id="PF03143">
    <property type="entry name" value="GTP_EFTU_D3"/>
    <property type="match status" value="1"/>
</dbReference>
<dbReference type="PRINTS" id="PR00315">
    <property type="entry name" value="ELONGATNFCT"/>
</dbReference>
<dbReference type="SUPFAM" id="SSF50465">
    <property type="entry name" value="EF-Tu/eEF-1alpha/eIF2-gamma C-terminal domain"/>
    <property type="match status" value="1"/>
</dbReference>
<dbReference type="SUPFAM" id="SSF52540">
    <property type="entry name" value="P-loop containing nucleoside triphosphate hydrolases"/>
    <property type="match status" value="1"/>
</dbReference>
<dbReference type="SUPFAM" id="SSF50447">
    <property type="entry name" value="Translation proteins"/>
    <property type="match status" value="1"/>
</dbReference>
<dbReference type="PROSITE" id="PS00301">
    <property type="entry name" value="G_TR_1"/>
    <property type="match status" value="1"/>
</dbReference>
<dbReference type="PROSITE" id="PS51722">
    <property type="entry name" value="G_TR_2"/>
    <property type="match status" value="1"/>
</dbReference>
<protein>
    <recommendedName>
        <fullName evidence="2">Elongation factor Tu</fullName>
        <shortName evidence="2">EF-Tu</shortName>
        <ecNumber evidence="2">3.6.5.3</ecNumber>
    </recommendedName>
</protein>
<comment type="function">
    <text evidence="2">GTP hydrolase that promotes the GTP-dependent binding of aminoacyl-tRNA to the A-site of ribosomes during protein biosynthesis.</text>
</comment>
<comment type="catalytic activity">
    <reaction evidence="2">
        <text>GTP + H2O = GDP + phosphate + H(+)</text>
        <dbReference type="Rhea" id="RHEA:19669"/>
        <dbReference type="ChEBI" id="CHEBI:15377"/>
        <dbReference type="ChEBI" id="CHEBI:15378"/>
        <dbReference type="ChEBI" id="CHEBI:37565"/>
        <dbReference type="ChEBI" id="CHEBI:43474"/>
        <dbReference type="ChEBI" id="CHEBI:58189"/>
        <dbReference type="EC" id="3.6.5.3"/>
    </reaction>
    <physiologicalReaction direction="left-to-right" evidence="2">
        <dbReference type="Rhea" id="RHEA:19670"/>
    </physiologicalReaction>
</comment>
<comment type="subunit">
    <text evidence="2">Monomer.</text>
</comment>
<comment type="subcellular location">
    <subcellularLocation>
        <location evidence="2">Cytoplasm</location>
    </subcellularLocation>
</comment>
<comment type="similarity">
    <text evidence="2">Belongs to the TRAFAC class translation factor GTPase superfamily. Classic translation factor GTPase family. EF-Tu/EF-1A subfamily.</text>
</comment>
<gene>
    <name evidence="2" type="primary">tufA</name>
    <name type="synonym">tufA1</name>
    <name type="ordered locus">NMA0134</name>
</gene>
<gene>
    <name evidence="2" type="primary">tufB</name>
    <name type="synonym">tufA2</name>
    <name type="ordered locus">NMA0149</name>
</gene>
<keyword id="KW-0963">Cytoplasm</keyword>
<keyword id="KW-0251">Elongation factor</keyword>
<keyword id="KW-0342">GTP-binding</keyword>
<keyword id="KW-0378">Hydrolase</keyword>
<keyword id="KW-0460">Magnesium</keyword>
<keyword id="KW-0479">Metal-binding</keyword>
<keyword id="KW-0547">Nucleotide-binding</keyword>
<keyword id="KW-0648">Protein biosynthesis</keyword>
<accession>P64026</accession>
<accession>A1INZ5</accession>
<accession>Q9JRI5</accession>
<accession>Q9K1I7</accession>
<organism>
    <name type="scientific">Neisseria meningitidis serogroup A / serotype 4A (strain DSM 15465 / Z2491)</name>
    <dbReference type="NCBI Taxonomy" id="122587"/>
    <lineage>
        <taxon>Bacteria</taxon>
        <taxon>Pseudomonadati</taxon>
        <taxon>Pseudomonadota</taxon>
        <taxon>Betaproteobacteria</taxon>
        <taxon>Neisseriales</taxon>
        <taxon>Neisseriaceae</taxon>
        <taxon>Neisseria</taxon>
    </lineage>
</organism>
<evidence type="ECO:0000250" key="1"/>
<evidence type="ECO:0000255" key="2">
    <source>
        <dbReference type="HAMAP-Rule" id="MF_00118"/>
    </source>
</evidence>
<name>EFTU_NEIMA</name>
<proteinExistence type="inferred from homology"/>
<reference key="1">
    <citation type="journal article" date="2000" name="Nature">
        <title>Complete DNA sequence of a serogroup A strain of Neisseria meningitidis Z2491.</title>
        <authorList>
            <person name="Parkhill J."/>
            <person name="Achtman M."/>
            <person name="James K.D."/>
            <person name="Bentley S.D."/>
            <person name="Churcher C.M."/>
            <person name="Klee S.R."/>
            <person name="Morelli G."/>
            <person name="Basham D."/>
            <person name="Brown D."/>
            <person name="Chillingworth T."/>
            <person name="Davies R.M."/>
            <person name="Davis P."/>
            <person name="Devlin K."/>
            <person name="Feltwell T."/>
            <person name="Hamlin N."/>
            <person name="Holroyd S."/>
            <person name="Jagels K."/>
            <person name="Leather S."/>
            <person name="Moule S."/>
            <person name="Mungall K.L."/>
            <person name="Quail M.A."/>
            <person name="Rajandream M.A."/>
            <person name="Rutherford K.M."/>
            <person name="Simmonds M."/>
            <person name="Skelton J."/>
            <person name="Whitehead S."/>
            <person name="Spratt B.G."/>
            <person name="Barrell B.G."/>
        </authorList>
    </citation>
    <scope>NUCLEOTIDE SEQUENCE [LARGE SCALE GENOMIC DNA]</scope>
    <source>
        <strain>DSM 15465 / Z2491</strain>
    </source>
</reference>